<keyword id="KW-0238">DNA-binding</keyword>
<keyword id="KW-0804">Transcription</keyword>
<keyword id="KW-0805">Transcription regulation</keyword>
<sequence>MKTFLTEQQIKVLVLRAKGLKQSEIAKILKTTRANVSILEKRALEKIEKAKNTLLLWEQINSKVNVNVKAGEDIFSVPEKLFKKADEAGVKVPYSTAEIIAFLVEHAPIENRLAKRDFVIFLDSKNRLRISDCLINLDEIEKK</sequence>
<comment type="function">
    <text evidence="1">Putative transcriptional regulator.</text>
</comment>
<comment type="similarity">
    <text evidence="1">Belongs to the Tfx family.</text>
</comment>
<comment type="sequence caution" evidence="2">
    <conflict type="erroneous initiation">
        <sequence resource="EMBL-CDS" id="BAA29854"/>
    </conflict>
</comment>
<feature type="chain" id="PRO_0000144174" description="Putative transcriptional regulatory protein PH0763">
    <location>
        <begin position="1"/>
        <end position="143"/>
    </location>
</feature>
<proteinExistence type="inferred from homology"/>
<evidence type="ECO:0000255" key="1">
    <source>
        <dbReference type="HAMAP-Rule" id="MF_00620"/>
    </source>
</evidence>
<evidence type="ECO:0000305" key="2"/>
<reference key="1">
    <citation type="journal article" date="1998" name="DNA Res.">
        <title>Complete sequence and gene organization of the genome of a hyper-thermophilic archaebacterium, Pyrococcus horikoshii OT3.</title>
        <authorList>
            <person name="Kawarabayasi Y."/>
            <person name="Sawada M."/>
            <person name="Horikawa H."/>
            <person name="Haikawa Y."/>
            <person name="Hino Y."/>
            <person name="Yamamoto S."/>
            <person name="Sekine M."/>
            <person name="Baba S."/>
            <person name="Kosugi H."/>
            <person name="Hosoyama A."/>
            <person name="Nagai Y."/>
            <person name="Sakai M."/>
            <person name="Ogura K."/>
            <person name="Otsuka R."/>
            <person name="Nakazawa H."/>
            <person name="Takamiya M."/>
            <person name="Ohfuku Y."/>
            <person name="Funahashi T."/>
            <person name="Tanaka T."/>
            <person name="Kudoh Y."/>
            <person name="Yamazaki J."/>
            <person name="Kushida N."/>
            <person name="Oguchi A."/>
            <person name="Aoki K."/>
            <person name="Yoshizawa T."/>
            <person name="Nakamura Y."/>
            <person name="Robb F.T."/>
            <person name="Horikoshi K."/>
            <person name="Masuchi Y."/>
            <person name="Shizuya H."/>
            <person name="Kikuchi H."/>
        </authorList>
    </citation>
    <scope>NUCLEOTIDE SEQUENCE [LARGE SCALE GENOMIC DNA]</scope>
    <source>
        <strain>ATCC 700860 / DSM 12428 / JCM 9974 / NBRC 100139 / OT-3</strain>
    </source>
</reference>
<gene>
    <name type="ordered locus">PH0763</name>
</gene>
<protein>
    <recommendedName>
        <fullName evidence="1">Putative transcriptional regulatory protein PH0763</fullName>
    </recommendedName>
</protein>
<accession>O58497</accession>
<name>Y763_PYRHO</name>
<organism>
    <name type="scientific">Pyrococcus horikoshii (strain ATCC 700860 / DSM 12428 / JCM 9974 / NBRC 100139 / OT-3)</name>
    <dbReference type="NCBI Taxonomy" id="70601"/>
    <lineage>
        <taxon>Archaea</taxon>
        <taxon>Methanobacteriati</taxon>
        <taxon>Methanobacteriota</taxon>
        <taxon>Thermococci</taxon>
        <taxon>Thermococcales</taxon>
        <taxon>Thermococcaceae</taxon>
        <taxon>Pyrococcus</taxon>
    </lineage>
</organism>
<dbReference type="EMBL" id="BA000001">
    <property type="protein sequence ID" value="BAA29854.1"/>
    <property type="status" value="ALT_INIT"/>
    <property type="molecule type" value="Genomic_DNA"/>
</dbReference>
<dbReference type="PIR" id="D71124">
    <property type="entry name" value="D71124"/>
</dbReference>
<dbReference type="RefSeq" id="WP_048053211.1">
    <property type="nucleotide sequence ID" value="NC_000961.1"/>
</dbReference>
<dbReference type="SMR" id="O58497"/>
<dbReference type="EnsemblBacteria" id="BAA29854">
    <property type="protein sequence ID" value="BAA29854"/>
    <property type="gene ID" value="BAA29854"/>
</dbReference>
<dbReference type="GeneID" id="1443089"/>
<dbReference type="KEGG" id="pho:PH0763"/>
<dbReference type="eggNOG" id="arCOG04554">
    <property type="taxonomic scope" value="Archaea"/>
</dbReference>
<dbReference type="OrthoDB" id="17771at2157"/>
<dbReference type="Proteomes" id="UP000000752">
    <property type="component" value="Chromosome"/>
</dbReference>
<dbReference type="GO" id="GO:0003677">
    <property type="term" value="F:DNA binding"/>
    <property type="evidence" value="ECO:0007669"/>
    <property type="project" value="UniProtKB-KW"/>
</dbReference>
<dbReference type="GO" id="GO:0003700">
    <property type="term" value="F:DNA-binding transcription factor activity"/>
    <property type="evidence" value="ECO:0007669"/>
    <property type="project" value="UniProtKB-UniRule"/>
</dbReference>
<dbReference type="GO" id="GO:0006352">
    <property type="term" value="P:DNA-templated transcription initiation"/>
    <property type="evidence" value="ECO:0007669"/>
    <property type="project" value="InterPro"/>
</dbReference>
<dbReference type="Gene3D" id="3.30.1190.10">
    <property type="entry name" value="DNA-binding protein Tfx superfamily, archaea"/>
    <property type="match status" value="1"/>
</dbReference>
<dbReference type="HAMAP" id="MF_00620">
    <property type="entry name" value="HTH_type_Tfx"/>
    <property type="match status" value="1"/>
</dbReference>
<dbReference type="InterPro" id="IPR007630">
    <property type="entry name" value="RNA_pol_sigma70_r4"/>
</dbReference>
<dbReference type="InterPro" id="IPR029291">
    <property type="entry name" value="Tfx_C"/>
</dbReference>
<dbReference type="InterPro" id="IPR004645">
    <property type="entry name" value="Tfx_DNA-bd_arc"/>
</dbReference>
<dbReference type="InterPro" id="IPR018384">
    <property type="entry name" value="Tfx_DNA-bd_euryarc"/>
</dbReference>
<dbReference type="InterPro" id="IPR036657">
    <property type="entry name" value="Tfx_DNA-bd_sf_arc"/>
</dbReference>
<dbReference type="NCBIfam" id="NF003055">
    <property type="entry name" value="PRK03975.1-2"/>
    <property type="match status" value="1"/>
</dbReference>
<dbReference type="NCBIfam" id="NF003056">
    <property type="entry name" value="PRK03975.1-4"/>
    <property type="match status" value="1"/>
</dbReference>
<dbReference type="NCBIfam" id="TIGR00721">
    <property type="entry name" value="tfx"/>
    <property type="match status" value="1"/>
</dbReference>
<dbReference type="Pfam" id="PF04545">
    <property type="entry name" value="Sigma70_r4"/>
    <property type="match status" value="1"/>
</dbReference>
<dbReference type="Pfam" id="PF14601">
    <property type="entry name" value="TFX_C"/>
    <property type="match status" value="1"/>
</dbReference>
<dbReference type="PIRSF" id="PIRSF004932">
    <property type="entry name" value="DNA_bind_Tfx"/>
    <property type="match status" value="1"/>
</dbReference>
<dbReference type="SUPFAM" id="SSF89915">
    <property type="entry name" value="DNA-binding protein Tfx"/>
    <property type="match status" value="1"/>
</dbReference>